<protein>
    <recommendedName>
        <fullName evidence="3">Periviscerokinin-1</fullName>
        <shortName evidence="3">PerAu-PVK-1</shortName>
    </recommendedName>
</protein>
<keyword id="KW-0027">Amidation</keyword>
<keyword id="KW-0903">Direct protein sequencing</keyword>
<keyword id="KW-0527">Neuropeptide</keyword>
<keyword id="KW-0964">Secreted</keyword>
<dbReference type="GO" id="GO:0005576">
    <property type="term" value="C:extracellular region"/>
    <property type="evidence" value="ECO:0007669"/>
    <property type="project" value="UniProtKB-SubCell"/>
</dbReference>
<dbReference type="GO" id="GO:0007218">
    <property type="term" value="P:neuropeptide signaling pathway"/>
    <property type="evidence" value="ECO:0007669"/>
    <property type="project" value="UniProtKB-KW"/>
</dbReference>
<evidence type="ECO:0000255" key="1"/>
<evidence type="ECO:0000269" key="2">
    <source>
    </source>
</evidence>
<evidence type="ECO:0000303" key="3">
    <source>
    </source>
</evidence>
<evidence type="ECO:0000305" key="4"/>
<proteinExistence type="evidence at protein level"/>
<name>PVK1_PERAU</name>
<organism>
    <name type="scientific">Periplaneta australasiae</name>
    <name type="common">Australian cockroach</name>
    <name type="synonym">Blatta australasiae</name>
    <dbReference type="NCBI Taxonomy" id="36975"/>
    <lineage>
        <taxon>Eukaryota</taxon>
        <taxon>Metazoa</taxon>
        <taxon>Ecdysozoa</taxon>
        <taxon>Arthropoda</taxon>
        <taxon>Hexapoda</taxon>
        <taxon>Insecta</taxon>
        <taxon>Pterygota</taxon>
        <taxon>Neoptera</taxon>
        <taxon>Polyneoptera</taxon>
        <taxon>Dictyoptera</taxon>
        <taxon>Blattodea</taxon>
        <taxon>Blattoidea</taxon>
        <taxon>Blattidae</taxon>
        <taxon>Blattinae</taxon>
        <taxon>Periplaneta</taxon>
    </lineage>
</organism>
<feature type="peptide" id="PRO_0000378756" description="Periviscerokinin-1" evidence="2">
    <location>
        <begin position="1"/>
        <end position="11"/>
    </location>
</feature>
<feature type="modified residue" description="Asparagine amide" evidence="2">
    <location>
        <position position="11"/>
    </location>
</feature>
<sequence>GASGLIPVMRN</sequence>
<comment type="function">
    <text evidence="4">Mediates visceral muscle contractile activity (myotropic activity).</text>
</comment>
<comment type="subcellular location">
    <subcellularLocation>
        <location evidence="4">Secreted</location>
    </subcellularLocation>
</comment>
<comment type="similarity">
    <text evidence="1">Belongs to the periviscerokinin family.</text>
</comment>
<reference evidence="4" key="1">
    <citation type="journal article" date="2009" name="BMC Evol. Biol.">
        <title>A proteomic approach for studying insect phylogeny: CAPA peptides of ancient insect taxa (Dictyoptera, Blattoptera) as a test case.</title>
        <authorList>
            <person name="Roth S."/>
            <person name="Fromm B."/>
            <person name="Gaede G."/>
            <person name="Predel R."/>
        </authorList>
    </citation>
    <scope>PROTEIN SEQUENCE</scope>
    <scope>AMIDATION AT ASN-11</scope>
    <source>
        <tissue evidence="2">Abdominal perisympathetic organs</tissue>
    </source>
</reference>
<accession>P85701</accession>